<evidence type="ECO:0000250" key="1">
    <source>
        <dbReference type="UniProtKB" id="Q9H9B4"/>
    </source>
</evidence>
<evidence type="ECO:0000255" key="2"/>
<evidence type="ECO:0000269" key="3">
    <source>
    </source>
</evidence>
<evidence type="ECO:0000303" key="4">
    <source>
    </source>
</evidence>
<evidence type="ECO:0000305" key="5"/>
<evidence type="ECO:0000305" key="6">
    <source>
    </source>
</evidence>
<evidence type="ECO:0000312" key="7">
    <source>
        <dbReference type="MGI" id="MGI:2137677"/>
    </source>
</evidence>
<organism>
    <name type="scientific">Mus musculus</name>
    <name type="common">Mouse</name>
    <dbReference type="NCBI Taxonomy" id="10090"/>
    <lineage>
        <taxon>Eukaryota</taxon>
        <taxon>Metazoa</taxon>
        <taxon>Chordata</taxon>
        <taxon>Craniata</taxon>
        <taxon>Vertebrata</taxon>
        <taxon>Euteleostomi</taxon>
        <taxon>Mammalia</taxon>
        <taxon>Eutheria</taxon>
        <taxon>Euarchontoglires</taxon>
        <taxon>Glires</taxon>
        <taxon>Rodentia</taxon>
        <taxon>Myomorpha</taxon>
        <taxon>Muroidea</taxon>
        <taxon>Muridae</taxon>
        <taxon>Murinae</taxon>
        <taxon>Mus</taxon>
        <taxon>Mus</taxon>
    </lineage>
</organism>
<accession>Q99JR1</accession>
<accession>Q3UB44</accession>
<accession>Q9CZG4</accession>
<reference key="1">
    <citation type="journal article" date="2001" name="Genes Dev.">
        <title>A mutation in a mitochondrial transmembrane protein is responsible for the pleiotropic hematological and skeletal phenotype of flexed-tail (f/f) mice.</title>
        <authorList>
            <person name="Fleming M.D."/>
            <person name="Campagna D.R."/>
            <person name="Haslett J.N."/>
            <person name="Trenor C.C. III"/>
            <person name="Andrews N.C."/>
        </authorList>
    </citation>
    <scope>NUCLEOTIDE SEQUENCE [MRNA]</scope>
    <scope>SUBCELLULAR LOCATION</scope>
    <scope>TISSUE SPECIFICITY</scope>
    <scope>DEVELOPMENTAL STAGE</scope>
    <scope>DISRUPTION PHENOTYPE</scope>
</reference>
<reference key="2">
    <citation type="journal article" date="2005" name="Science">
        <title>The transcriptional landscape of the mammalian genome.</title>
        <authorList>
            <person name="Carninci P."/>
            <person name="Kasukawa T."/>
            <person name="Katayama S."/>
            <person name="Gough J."/>
            <person name="Frith M.C."/>
            <person name="Maeda N."/>
            <person name="Oyama R."/>
            <person name="Ravasi T."/>
            <person name="Lenhard B."/>
            <person name="Wells C."/>
            <person name="Kodzius R."/>
            <person name="Shimokawa K."/>
            <person name="Bajic V.B."/>
            <person name="Brenner S.E."/>
            <person name="Batalov S."/>
            <person name="Forrest A.R."/>
            <person name="Zavolan M."/>
            <person name="Davis M.J."/>
            <person name="Wilming L.G."/>
            <person name="Aidinis V."/>
            <person name="Allen J.E."/>
            <person name="Ambesi-Impiombato A."/>
            <person name="Apweiler R."/>
            <person name="Aturaliya R.N."/>
            <person name="Bailey T.L."/>
            <person name="Bansal M."/>
            <person name="Baxter L."/>
            <person name="Beisel K.W."/>
            <person name="Bersano T."/>
            <person name="Bono H."/>
            <person name="Chalk A.M."/>
            <person name="Chiu K.P."/>
            <person name="Choudhary V."/>
            <person name="Christoffels A."/>
            <person name="Clutterbuck D.R."/>
            <person name="Crowe M.L."/>
            <person name="Dalla E."/>
            <person name="Dalrymple B.P."/>
            <person name="de Bono B."/>
            <person name="Della Gatta G."/>
            <person name="di Bernardo D."/>
            <person name="Down T."/>
            <person name="Engstrom P."/>
            <person name="Fagiolini M."/>
            <person name="Faulkner G."/>
            <person name="Fletcher C.F."/>
            <person name="Fukushima T."/>
            <person name="Furuno M."/>
            <person name="Futaki S."/>
            <person name="Gariboldi M."/>
            <person name="Georgii-Hemming P."/>
            <person name="Gingeras T.R."/>
            <person name="Gojobori T."/>
            <person name="Green R.E."/>
            <person name="Gustincich S."/>
            <person name="Harbers M."/>
            <person name="Hayashi Y."/>
            <person name="Hensch T.K."/>
            <person name="Hirokawa N."/>
            <person name="Hill D."/>
            <person name="Huminiecki L."/>
            <person name="Iacono M."/>
            <person name="Ikeo K."/>
            <person name="Iwama A."/>
            <person name="Ishikawa T."/>
            <person name="Jakt M."/>
            <person name="Kanapin A."/>
            <person name="Katoh M."/>
            <person name="Kawasawa Y."/>
            <person name="Kelso J."/>
            <person name="Kitamura H."/>
            <person name="Kitano H."/>
            <person name="Kollias G."/>
            <person name="Krishnan S.P."/>
            <person name="Kruger A."/>
            <person name="Kummerfeld S.K."/>
            <person name="Kurochkin I.V."/>
            <person name="Lareau L.F."/>
            <person name="Lazarevic D."/>
            <person name="Lipovich L."/>
            <person name="Liu J."/>
            <person name="Liuni S."/>
            <person name="McWilliam S."/>
            <person name="Madan Babu M."/>
            <person name="Madera M."/>
            <person name="Marchionni L."/>
            <person name="Matsuda H."/>
            <person name="Matsuzawa S."/>
            <person name="Miki H."/>
            <person name="Mignone F."/>
            <person name="Miyake S."/>
            <person name="Morris K."/>
            <person name="Mottagui-Tabar S."/>
            <person name="Mulder N."/>
            <person name="Nakano N."/>
            <person name="Nakauchi H."/>
            <person name="Ng P."/>
            <person name="Nilsson R."/>
            <person name="Nishiguchi S."/>
            <person name="Nishikawa S."/>
            <person name="Nori F."/>
            <person name="Ohara O."/>
            <person name="Okazaki Y."/>
            <person name="Orlando V."/>
            <person name="Pang K.C."/>
            <person name="Pavan W.J."/>
            <person name="Pavesi G."/>
            <person name="Pesole G."/>
            <person name="Petrovsky N."/>
            <person name="Piazza S."/>
            <person name="Reed J."/>
            <person name="Reid J.F."/>
            <person name="Ring B.Z."/>
            <person name="Ringwald M."/>
            <person name="Rost B."/>
            <person name="Ruan Y."/>
            <person name="Salzberg S.L."/>
            <person name="Sandelin A."/>
            <person name="Schneider C."/>
            <person name="Schoenbach C."/>
            <person name="Sekiguchi K."/>
            <person name="Semple C.A."/>
            <person name="Seno S."/>
            <person name="Sessa L."/>
            <person name="Sheng Y."/>
            <person name="Shibata Y."/>
            <person name="Shimada H."/>
            <person name="Shimada K."/>
            <person name="Silva D."/>
            <person name="Sinclair B."/>
            <person name="Sperling S."/>
            <person name="Stupka E."/>
            <person name="Sugiura K."/>
            <person name="Sultana R."/>
            <person name="Takenaka Y."/>
            <person name="Taki K."/>
            <person name="Tammoja K."/>
            <person name="Tan S.L."/>
            <person name="Tang S."/>
            <person name="Taylor M.S."/>
            <person name="Tegner J."/>
            <person name="Teichmann S.A."/>
            <person name="Ueda H.R."/>
            <person name="van Nimwegen E."/>
            <person name="Verardo R."/>
            <person name="Wei C.L."/>
            <person name="Yagi K."/>
            <person name="Yamanishi H."/>
            <person name="Zabarovsky E."/>
            <person name="Zhu S."/>
            <person name="Zimmer A."/>
            <person name="Hide W."/>
            <person name="Bult C."/>
            <person name="Grimmond S.M."/>
            <person name="Teasdale R.D."/>
            <person name="Liu E.T."/>
            <person name="Brusic V."/>
            <person name="Quackenbush J."/>
            <person name="Wahlestedt C."/>
            <person name="Mattick J.S."/>
            <person name="Hume D.A."/>
            <person name="Kai C."/>
            <person name="Sasaki D."/>
            <person name="Tomaru Y."/>
            <person name="Fukuda S."/>
            <person name="Kanamori-Katayama M."/>
            <person name="Suzuki M."/>
            <person name="Aoki J."/>
            <person name="Arakawa T."/>
            <person name="Iida J."/>
            <person name="Imamura K."/>
            <person name="Itoh M."/>
            <person name="Kato T."/>
            <person name="Kawaji H."/>
            <person name="Kawagashira N."/>
            <person name="Kawashima T."/>
            <person name="Kojima M."/>
            <person name="Kondo S."/>
            <person name="Konno H."/>
            <person name="Nakano K."/>
            <person name="Ninomiya N."/>
            <person name="Nishio T."/>
            <person name="Okada M."/>
            <person name="Plessy C."/>
            <person name="Shibata K."/>
            <person name="Shiraki T."/>
            <person name="Suzuki S."/>
            <person name="Tagami M."/>
            <person name="Waki K."/>
            <person name="Watahiki A."/>
            <person name="Okamura-Oho Y."/>
            <person name="Suzuki H."/>
            <person name="Kawai J."/>
            <person name="Hayashizaki Y."/>
        </authorList>
    </citation>
    <scope>NUCLEOTIDE SEQUENCE [LARGE SCALE MRNA]</scope>
    <source>
        <strain>C57BL/6J</strain>
        <tissue>Bone marrow</tissue>
        <tissue>Embryo</tissue>
    </source>
</reference>
<reference key="3">
    <citation type="journal article" date="2004" name="Genome Res.">
        <title>The status, quality, and expansion of the NIH full-length cDNA project: the Mammalian Gene Collection (MGC).</title>
        <authorList>
            <consortium name="The MGC Project Team"/>
        </authorList>
    </citation>
    <scope>NUCLEOTIDE SEQUENCE [LARGE SCALE MRNA]</scope>
    <source>
        <tissue>Mammary gland</tissue>
    </source>
</reference>
<reference key="4">
    <citation type="submission" date="2007-04" db="UniProtKB">
        <authorList>
            <person name="Lubec G."/>
            <person name="Kang S.U."/>
        </authorList>
    </citation>
    <scope>PROTEIN SEQUENCE OF 16-24; 73-86; 179-197; 203-214 AND 224-233</scope>
    <scope>IDENTIFICATION BY MASS SPECTROMETRY</scope>
    <source>
        <strain>C57BL/6J</strain>
        <tissue>Brain</tissue>
    </source>
</reference>
<reference key="5">
    <citation type="journal article" date="2010" name="Cell">
        <title>A tissue-specific atlas of mouse protein phosphorylation and expression.</title>
        <authorList>
            <person name="Huttlin E.L."/>
            <person name="Jedrychowski M.P."/>
            <person name="Elias J.E."/>
            <person name="Goswami T."/>
            <person name="Rad R."/>
            <person name="Beausoleil S.A."/>
            <person name="Villen J."/>
            <person name="Haas W."/>
            <person name="Sowa M.E."/>
            <person name="Gygi S.P."/>
        </authorList>
    </citation>
    <scope>IDENTIFICATION BY MASS SPECTROMETRY [LARGE SCALE ANALYSIS]</scope>
    <source>
        <tissue>Brain</tissue>
        <tissue>Brown adipose tissue</tissue>
        <tissue>Heart</tissue>
        <tissue>Kidney</tissue>
        <tissue>Liver</tissue>
        <tissue>Lung</tissue>
        <tissue>Pancreas</tissue>
        <tissue>Spleen</tissue>
        <tissue>Testis</tissue>
    </source>
</reference>
<sequence>MSGEVPPNINIKEPRWDQSTFIGRASHFFTVTDPRNILLTNEQLENARKVVHDYRQGIVPAGLTENELWRAKYAYDSAFHPDTGEKMTLIGRMSAQVPMNMTITGCMMTFYRTTPAVLFWQWINQSFNAVVNYTNRSGDAPLTVNELGTAYVSATTGAVATALGLNALTKRVSPLIGRFVPFAAVAAANCINIPLMRQRELKVGIPVTDENGTRLGESTNAAKQAITQVVISRILMAAPGMAIPPFIMNTLEKKAFLKRFPWMSAPIQVTLVGFCLVFATPLCCALFPQKSSMSVTSLEDELQASIQRTHPEIRRVYFNKGL</sequence>
<feature type="initiator methionine" description="Removed" evidence="1">
    <location>
        <position position="1"/>
    </location>
</feature>
<feature type="chain" id="PRO_0000177033" description="Sideroflexin-1">
    <location>
        <begin position="2"/>
        <end position="322"/>
    </location>
</feature>
<feature type="topological domain" description="Mitochondrial matrix" evidence="1">
    <location>
        <begin position="2"/>
        <end position="102"/>
    </location>
</feature>
<feature type="transmembrane region" description="Helical" evidence="2">
    <location>
        <begin position="103"/>
        <end position="120"/>
    </location>
</feature>
<feature type="topological domain" description="Mitochondrial intermembrane" evidence="5">
    <location>
        <begin position="121"/>
        <end position="146"/>
    </location>
</feature>
<feature type="transmembrane region" description="Helical" evidence="2">
    <location>
        <begin position="147"/>
        <end position="167"/>
    </location>
</feature>
<feature type="topological domain" description="Mitochondrial matrix" evidence="5">
    <location>
        <begin position="168"/>
        <end position="174"/>
    </location>
</feature>
<feature type="transmembrane region" description="Helical" evidence="2">
    <location>
        <begin position="175"/>
        <end position="195"/>
    </location>
</feature>
<feature type="topological domain" description="Mitochondrial intermembrane" evidence="5">
    <location>
        <begin position="196"/>
        <end position="228"/>
    </location>
</feature>
<feature type="transmembrane region" description="Helical" evidence="2">
    <location>
        <begin position="229"/>
        <end position="249"/>
    </location>
</feature>
<feature type="topological domain" description="Mitochondrial matrix" evidence="5">
    <location>
        <begin position="250"/>
        <end position="266"/>
    </location>
</feature>
<feature type="transmembrane region" description="Helical" evidence="2">
    <location>
        <begin position="267"/>
        <end position="287"/>
    </location>
</feature>
<feature type="topological domain" description="Mitochondrial intermembrane" evidence="1">
    <location>
        <begin position="288"/>
        <end position="322"/>
    </location>
</feature>
<feature type="modified residue" description="N-acetylserine" evidence="1">
    <location>
        <position position="2"/>
    </location>
</feature>
<protein>
    <recommendedName>
        <fullName evidence="4">Sideroflexin-1</fullName>
    </recommendedName>
</protein>
<gene>
    <name evidence="4 7" type="primary">Sfxn1</name>
</gene>
<comment type="function">
    <text evidence="1">Amino acid transporter importing serine, an essential substrate of the mitochondrial branch of the one-carbon pathway, into mitochondria. Mitochondrial serine is then converted to glycine and formate, which exits to the cytosol where it is used to generate the charged folates that serve as one-carbon donors. May also transport other amino acids including alanine and cysteine.</text>
</comment>
<comment type="catalytic activity">
    <reaction evidence="1">
        <text>L-serine(in) = L-serine(out)</text>
        <dbReference type="Rhea" id="RHEA:35031"/>
        <dbReference type="ChEBI" id="CHEBI:33384"/>
    </reaction>
</comment>
<comment type="catalytic activity">
    <reaction evidence="1">
        <text>L-alanine(in) = L-alanine(out)</text>
        <dbReference type="Rhea" id="RHEA:70719"/>
        <dbReference type="ChEBI" id="CHEBI:57972"/>
    </reaction>
</comment>
<comment type="catalytic activity">
    <reaction evidence="1">
        <text>L-cysteine(in) = L-cysteine(out)</text>
        <dbReference type="Rhea" id="RHEA:29655"/>
        <dbReference type="ChEBI" id="CHEBI:35235"/>
    </reaction>
</comment>
<comment type="subcellular location">
    <subcellularLocation>
        <location evidence="6">Mitochondrion inner membrane</location>
        <topology evidence="2">Multi-pass membrane protein</topology>
    </subcellularLocation>
</comment>
<comment type="tissue specificity">
    <text evidence="3">Widely expressed, with highest expression in kidney and liver.</text>
</comment>
<comment type="developmental stage">
    <text evidence="3">Very high levels in the liver during the period of embryonic hepatic hemopoiesis.</text>
</comment>
<comment type="disruption phenotype">
    <text evidence="3">Defects in Sfxn1 are the cause of a transitory hypochromic, microcytic anemia characterized by a large number of siderocytes containing non-heme iron granules (PubMed:11274051). The anemia begins at 12 dpc, is most intense at 15 dpc and is still severe at birth, but disappears by 2 weeks of age (PubMed:11274051). Mutant adults are no longer anemic, but they have an impaired response to hemopoietic stress (PubMed:11274051). Most homozygotes also have flexed tails and a belly spot (PubMed:11274051).</text>
</comment>
<comment type="similarity">
    <text evidence="5">Belongs to the sideroflexin family.</text>
</comment>
<comment type="sequence caution" evidence="5">
    <conflict type="frameshift">
        <sequence resource="EMBL" id="AK012650"/>
    </conflict>
</comment>
<keyword id="KW-0007">Acetylation</keyword>
<keyword id="KW-0029">Amino-acid transport</keyword>
<keyword id="KW-0903">Direct protein sequencing</keyword>
<keyword id="KW-0472">Membrane</keyword>
<keyword id="KW-0496">Mitochondrion</keyword>
<keyword id="KW-0999">Mitochondrion inner membrane</keyword>
<keyword id="KW-0554">One-carbon metabolism</keyword>
<keyword id="KW-1185">Reference proteome</keyword>
<keyword id="KW-0812">Transmembrane</keyword>
<keyword id="KW-1133">Transmembrane helix</keyword>
<keyword id="KW-0813">Transport</keyword>
<name>SFXN1_MOUSE</name>
<proteinExistence type="evidence at protein level"/>
<dbReference type="EMBL" id="AF325260">
    <property type="protein sequence ID" value="AAK39428.1"/>
    <property type="molecule type" value="mRNA"/>
</dbReference>
<dbReference type="EMBL" id="AK012650">
    <property type="status" value="NOT_ANNOTATED_CDS"/>
    <property type="molecule type" value="mRNA"/>
</dbReference>
<dbReference type="EMBL" id="AK151110">
    <property type="protein sequence ID" value="BAE30120.1"/>
    <property type="molecule type" value="mRNA"/>
</dbReference>
<dbReference type="EMBL" id="BC005743">
    <property type="protein sequence ID" value="AAH05743.1"/>
    <property type="molecule type" value="mRNA"/>
</dbReference>
<dbReference type="CCDS" id="CCDS26525.1"/>
<dbReference type="RefSeq" id="NP_001415547.1">
    <property type="nucleotide sequence ID" value="NM_001428618.1"/>
</dbReference>
<dbReference type="RefSeq" id="NP_001415548.1">
    <property type="nucleotide sequence ID" value="NM_001428619.1"/>
</dbReference>
<dbReference type="RefSeq" id="NP_001415549.1">
    <property type="nucleotide sequence ID" value="NM_001428620.1"/>
</dbReference>
<dbReference type="RefSeq" id="NP_081600.1">
    <property type="nucleotide sequence ID" value="NM_027324.6"/>
</dbReference>
<dbReference type="RefSeq" id="XP_006516912.2">
    <property type="nucleotide sequence ID" value="XM_006516849.3"/>
</dbReference>
<dbReference type="RefSeq" id="XP_006516913.1">
    <property type="nucleotide sequence ID" value="XM_006516850.3"/>
</dbReference>
<dbReference type="BioGRID" id="199565">
    <property type="interactions" value="19"/>
</dbReference>
<dbReference type="FunCoup" id="Q99JR1">
    <property type="interactions" value="1784"/>
</dbReference>
<dbReference type="IntAct" id="Q99JR1">
    <property type="interactions" value="12"/>
</dbReference>
<dbReference type="MINT" id="Q99JR1"/>
<dbReference type="STRING" id="10090.ENSMUSP00000021930"/>
<dbReference type="GlyGen" id="Q99JR1">
    <property type="glycosylation" value="3 sites, 2 N-linked glycans (2 sites), 1 O-linked glycan (1 site)"/>
</dbReference>
<dbReference type="iPTMnet" id="Q99JR1"/>
<dbReference type="PhosphoSitePlus" id="Q99JR1"/>
<dbReference type="SwissPalm" id="Q99JR1"/>
<dbReference type="jPOST" id="Q99JR1"/>
<dbReference type="PaxDb" id="10090-ENSMUSP00000021930"/>
<dbReference type="PeptideAtlas" id="Q99JR1"/>
<dbReference type="ProteomicsDB" id="257212"/>
<dbReference type="Pumba" id="Q99JR1"/>
<dbReference type="Antibodypedia" id="17087">
    <property type="antibodies" value="168 antibodies from 26 providers"/>
</dbReference>
<dbReference type="DNASU" id="14057"/>
<dbReference type="Ensembl" id="ENSMUST00000021930.10">
    <property type="protein sequence ID" value="ENSMUSP00000021930.9"/>
    <property type="gene ID" value="ENSMUSG00000021474.10"/>
</dbReference>
<dbReference type="GeneID" id="14057"/>
<dbReference type="KEGG" id="mmu:14057"/>
<dbReference type="UCSC" id="uc007qoa.2">
    <property type="organism name" value="mouse"/>
</dbReference>
<dbReference type="AGR" id="MGI:2137677"/>
<dbReference type="CTD" id="94081"/>
<dbReference type="MGI" id="MGI:2137677">
    <property type="gene designation" value="Sfxn1"/>
</dbReference>
<dbReference type="VEuPathDB" id="HostDB:ENSMUSG00000021474"/>
<dbReference type="eggNOG" id="KOG3767">
    <property type="taxonomic scope" value="Eukaryota"/>
</dbReference>
<dbReference type="GeneTree" id="ENSGT01030000234641"/>
<dbReference type="HOGENOM" id="CLU_039425_1_0_1"/>
<dbReference type="InParanoid" id="Q99JR1"/>
<dbReference type="OMA" id="GRVRHCA"/>
<dbReference type="OrthoDB" id="6608471at2759"/>
<dbReference type="PhylomeDB" id="Q99JR1"/>
<dbReference type="TreeFam" id="TF313205"/>
<dbReference type="BioGRID-ORCS" id="14057">
    <property type="hits" value="6 hits in 75 CRISPR screens"/>
</dbReference>
<dbReference type="CD-CODE" id="CE726F99">
    <property type="entry name" value="Postsynaptic density"/>
</dbReference>
<dbReference type="ChiTaRS" id="Sfxn1">
    <property type="organism name" value="mouse"/>
</dbReference>
<dbReference type="PRO" id="PR:Q99JR1"/>
<dbReference type="Proteomes" id="UP000000589">
    <property type="component" value="Chromosome 13"/>
</dbReference>
<dbReference type="RNAct" id="Q99JR1">
    <property type="molecule type" value="protein"/>
</dbReference>
<dbReference type="Bgee" id="ENSMUSG00000021474">
    <property type="expression patterns" value="Expressed in epididymal fat pad and 254 other cell types or tissues"/>
</dbReference>
<dbReference type="GO" id="GO:0005743">
    <property type="term" value="C:mitochondrial inner membrane"/>
    <property type="evidence" value="ECO:0007005"/>
    <property type="project" value="MGI"/>
</dbReference>
<dbReference type="GO" id="GO:0005739">
    <property type="term" value="C:mitochondrion"/>
    <property type="evidence" value="ECO:0000314"/>
    <property type="project" value="MGI"/>
</dbReference>
<dbReference type="GO" id="GO:0015180">
    <property type="term" value="F:L-alanine transmembrane transporter activity"/>
    <property type="evidence" value="ECO:0000250"/>
    <property type="project" value="UniProtKB"/>
</dbReference>
<dbReference type="GO" id="GO:0015194">
    <property type="term" value="F:L-serine transmembrane transporter activity"/>
    <property type="evidence" value="ECO:0000315"/>
    <property type="project" value="FlyBase"/>
</dbReference>
<dbReference type="GO" id="GO:0015075">
    <property type="term" value="F:monoatomic ion transmembrane transporter activity"/>
    <property type="evidence" value="ECO:0007669"/>
    <property type="project" value="InterPro"/>
</dbReference>
<dbReference type="GO" id="GO:0030218">
    <property type="term" value="P:erythrocyte differentiation"/>
    <property type="evidence" value="ECO:0000315"/>
    <property type="project" value="MGI"/>
</dbReference>
<dbReference type="GO" id="GO:0006826">
    <property type="term" value="P:iron ion transport"/>
    <property type="evidence" value="ECO:0000315"/>
    <property type="project" value="MGI"/>
</dbReference>
<dbReference type="GO" id="GO:0015808">
    <property type="term" value="P:L-alanine transport"/>
    <property type="evidence" value="ECO:0000250"/>
    <property type="project" value="UniProtKB"/>
</dbReference>
<dbReference type="GO" id="GO:0015825">
    <property type="term" value="P:L-serine transport"/>
    <property type="evidence" value="ECO:0000250"/>
    <property type="project" value="UniProtKB"/>
</dbReference>
<dbReference type="GO" id="GO:0006730">
    <property type="term" value="P:one-carbon metabolic process"/>
    <property type="evidence" value="ECO:0000250"/>
    <property type="project" value="UniProtKB"/>
</dbReference>
<dbReference type="GO" id="GO:0140300">
    <property type="term" value="P:serine import into mitochondrion"/>
    <property type="evidence" value="ECO:0000315"/>
    <property type="project" value="FlyBase"/>
</dbReference>
<dbReference type="InterPro" id="IPR004686">
    <property type="entry name" value="Mtc"/>
</dbReference>
<dbReference type="NCBIfam" id="TIGR00798">
    <property type="entry name" value="mtc"/>
    <property type="match status" value="1"/>
</dbReference>
<dbReference type="PANTHER" id="PTHR11153">
    <property type="entry name" value="SIDEROFLEXIN"/>
    <property type="match status" value="1"/>
</dbReference>
<dbReference type="PANTHER" id="PTHR11153:SF8">
    <property type="entry name" value="SIDEROFLEXIN-1"/>
    <property type="match status" value="1"/>
</dbReference>
<dbReference type="Pfam" id="PF03820">
    <property type="entry name" value="SFXNs"/>
    <property type="match status" value="1"/>
</dbReference>